<protein>
    <recommendedName>
        <fullName evidence="1">DNA-directed RNA polymerase subunit beta'</fullName>
        <shortName evidence="1">RNAP subunit beta'</shortName>
        <ecNumber evidence="1">2.7.7.6</ecNumber>
    </recommendedName>
    <alternativeName>
        <fullName evidence="1">RNA polymerase subunit beta'</fullName>
    </alternativeName>
    <alternativeName>
        <fullName evidence="1">Transcriptase subunit beta'</fullName>
    </alternativeName>
</protein>
<accession>C3PKN2</accession>
<dbReference type="EC" id="2.7.7.6" evidence="1"/>
<dbReference type="EMBL" id="CP001601">
    <property type="protein sequence ID" value="ACP31968.1"/>
    <property type="molecule type" value="Genomic_DNA"/>
</dbReference>
<dbReference type="RefSeq" id="WP_010189705.1">
    <property type="nucleotide sequence ID" value="NC_012590.1"/>
</dbReference>
<dbReference type="SMR" id="C3PKN2"/>
<dbReference type="STRING" id="548476.cauri_0369"/>
<dbReference type="GeneID" id="31922989"/>
<dbReference type="KEGG" id="car:cauri_0369"/>
<dbReference type="eggNOG" id="COG0086">
    <property type="taxonomic scope" value="Bacteria"/>
</dbReference>
<dbReference type="HOGENOM" id="CLU_000524_3_1_11"/>
<dbReference type="OrthoDB" id="9815296at2"/>
<dbReference type="Proteomes" id="UP000002077">
    <property type="component" value="Chromosome"/>
</dbReference>
<dbReference type="GO" id="GO:0000428">
    <property type="term" value="C:DNA-directed RNA polymerase complex"/>
    <property type="evidence" value="ECO:0007669"/>
    <property type="project" value="UniProtKB-KW"/>
</dbReference>
<dbReference type="GO" id="GO:0003677">
    <property type="term" value="F:DNA binding"/>
    <property type="evidence" value="ECO:0007669"/>
    <property type="project" value="UniProtKB-UniRule"/>
</dbReference>
<dbReference type="GO" id="GO:0003899">
    <property type="term" value="F:DNA-directed RNA polymerase activity"/>
    <property type="evidence" value="ECO:0007669"/>
    <property type="project" value="UniProtKB-UniRule"/>
</dbReference>
<dbReference type="GO" id="GO:0000287">
    <property type="term" value="F:magnesium ion binding"/>
    <property type="evidence" value="ECO:0007669"/>
    <property type="project" value="UniProtKB-UniRule"/>
</dbReference>
<dbReference type="GO" id="GO:0008270">
    <property type="term" value="F:zinc ion binding"/>
    <property type="evidence" value="ECO:0007669"/>
    <property type="project" value="UniProtKB-UniRule"/>
</dbReference>
<dbReference type="GO" id="GO:0006351">
    <property type="term" value="P:DNA-templated transcription"/>
    <property type="evidence" value="ECO:0007669"/>
    <property type="project" value="UniProtKB-UniRule"/>
</dbReference>
<dbReference type="CDD" id="cd02655">
    <property type="entry name" value="RNAP_beta'_C"/>
    <property type="match status" value="1"/>
</dbReference>
<dbReference type="CDD" id="cd01609">
    <property type="entry name" value="RNAP_beta'_N"/>
    <property type="match status" value="1"/>
</dbReference>
<dbReference type="FunFam" id="1.10.150.390:FF:000002">
    <property type="entry name" value="DNA-directed RNA polymerase subunit beta"/>
    <property type="match status" value="1"/>
</dbReference>
<dbReference type="FunFam" id="1.10.40.90:FF:000001">
    <property type="entry name" value="DNA-directed RNA polymerase subunit beta"/>
    <property type="match status" value="1"/>
</dbReference>
<dbReference type="FunFam" id="4.10.860.120:FF:000001">
    <property type="entry name" value="DNA-directed RNA polymerase subunit beta"/>
    <property type="match status" value="1"/>
</dbReference>
<dbReference type="Gene3D" id="1.10.132.30">
    <property type="match status" value="1"/>
</dbReference>
<dbReference type="Gene3D" id="1.10.150.390">
    <property type="match status" value="1"/>
</dbReference>
<dbReference type="Gene3D" id="1.10.1790.20">
    <property type="match status" value="1"/>
</dbReference>
<dbReference type="Gene3D" id="1.10.40.90">
    <property type="match status" value="1"/>
</dbReference>
<dbReference type="Gene3D" id="2.40.40.20">
    <property type="match status" value="1"/>
</dbReference>
<dbReference type="Gene3D" id="2.40.50.100">
    <property type="match status" value="1"/>
</dbReference>
<dbReference type="Gene3D" id="4.10.860.120">
    <property type="entry name" value="RNA polymerase II, clamp domain"/>
    <property type="match status" value="1"/>
</dbReference>
<dbReference type="Gene3D" id="1.10.274.100">
    <property type="entry name" value="RNA polymerase Rpb1, domain 3"/>
    <property type="match status" value="1"/>
</dbReference>
<dbReference type="HAMAP" id="MF_01322">
    <property type="entry name" value="RNApol_bact_RpoC"/>
    <property type="match status" value="1"/>
</dbReference>
<dbReference type="InterPro" id="IPR045867">
    <property type="entry name" value="DNA-dir_RpoC_beta_prime"/>
</dbReference>
<dbReference type="InterPro" id="IPR012754">
    <property type="entry name" value="DNA-dir_RpoC_beta_prime_bact"/>
</dbReference>
<dbReference type="InterPro" id="IPR000722">
    <property type="entry name" value="RNA_pol_asu"/>
</dbReference>
<dbReference type="InterPro" id="IPR006592">
    <property type="entry name" value="RNA_pol_N"/>
</dbReference>
<dbReference type="InterPro" id="IPR007080">
    <property type="entry name" value="RNA_pol_Rpb1_1"/>
</dbReference>
<dbReference type="InterPro" id="IPR007066">
    <property type="entry name" value="RNA_pol_Rpb1_3"/>
</dbReference>
<dbReference type="InterPro" id="IPR042102">
    <property type="entry name" value="RNA_pol_Rpb1_3_sf"/>
</dbReference>
<dbReference type="InterPro" id="IPR007083">
    <property type="entry name" value="RNA_pol_Rpb1_4"/>
</dbReference>
<dbReference type="InterPro" id="IPR007081">
    <property type="entry name" value="RNA_pol_Rpb1_5"/>
</dbReference>
<dbReference type="InterPro" id="IPR044893">
    <property type="entry name" value="RNA_pol_Rpb1_clamp_domain"/>
</dbReference>
<dbReference type="InterPro" id="IPR038120">
    <property type="entry name" value="Rpb1_funnel_sf"/>
</dbReference>
<dbReference type="NCBIfam" id="NF011498">
    <property type="entry name" value="PRK14906.1"/>
    <property type="match status" value="1"/>
</dbReference>
<dbReference type="NCBIfam" id="TIGR02386">
    <property type="entry name" value="rpoC_TIGR"/>
    <property type="match status" value="1"/>
</dbReference>
<dbReference type="PANTHER" id="PTHR19376">
    <property type="entry name" value="DNA-DIRECTED RNA POLYMERASE"/>
    <property type="match status" value="1"/>
</dbReference>
<dbReference type="PANTHER" id="PTHR19376:SF54">
    <property type="entry name" value="DNA-DIRECTED RNA POLYMERASE SUBUNIT BETA"/>
    <property type="match status" value="1"/>
</dbReference>
<dbReference type="Pfam" id="PF04997">
    <property type="entry name" value="RNA_pol_Rpb1_1"/>
    <property type="match status" value="1"/>
</dbReference>
<dbReference type="Pfam" id="PF00623">
    <property type="entry name" value="RNA_pol_Rpb1_2"/>
    <property type="match status" value="1"/>
</dbReference>
<dbReference type="Pfam" id="PF04983">
    <property type="entry name" value="RNA_pol_Rpb1_3"/>
    <property type="match status" value="1"/>
</dbReference>
<dbReference type="Pfam" id="PF05000">
    <property type="entry name" value="RNA_pol_Rpb1_4"/>
    <property type="match status" value="1"/>
</dbReference>
<dbReference type="Pfam" id="PF04998">
    <property type="entry name" value="RNA_pol_Rpb1_5"/>
    <property type="match status" value="1"/>
</dbReference>
<dbReference type="SMART" id="SM00663">
    <property type="entry name" value="RPOLA_N"/>
    <property type="match status" value="1"/>
</dbReference>
<dbReference type="SUPFAM" id="SSF64484">
    <property type="entry name" value="beta and beta-prime subunits of DNA dependent RNA-polymerase"/>
    <property type="match status" value="1"/>
</dbReference>
<evidence type="ECO:0000255" key="1">
    <source>
        <dbReference type="HAMAP-Rule" id="MF_01322"/>
    </source>
</evidence>
<feature type="chain" id="PRO_1000165840" description="DNA-directed RNA polymerase subunit beta'">
    <location>
        <begin position="1"/>
        <end position="1331"/>
    </location>
</feature>
<feature type="binding site" evidence="1">
    <location>
        <position position="60"/>
    </location>
    <ligand>
        <name>Zn(2+)</name>
        <dbReference type="ChEBI" id="CHEBI:29105"/>
        <label>1</label>
    </ligand>
</feature>
<feature type="binding site" evidence="1">
    <location>
        <position position="62"/>
    </location>
    <ligand>
        <name>Zn(2+)</name>
        <dbReference type="ChEBI" id="CHEBI:29105"/>
        <label>1</label>
    </ligand>
</feature>
<feature type="binding site" evidence="1">
    <location>
        <position position="75"/>
    </location>
    <ligand>
        <name>Zn(2+)</name>
        <dbReference type="ChEBI" id="CHEBI:29105"/>
        <label>1</label>
    </ligand>
</feature>
<feature type="binding site" evidence="1">
    <location>
        <position position="78"/>
    </location>
    <ligand>
        <name>Zn(2+)</name>
        <dbReference type="ChEBI" id="CHEBI:29105"/>
        <label>1</label>
    </ligand>
</feature>
<feature type="binding site" evidence="1">
    <location>
        <position position="535"/>
    </location>
    <ligand>
        <name>Mg(2+)</name>
        <dbReference type="ChEBI" id="CHEBI:18420"/>
    </ligand>
</feature>
<feature type="binding site" evidence="1">
    <location>
        <position position="537"/>
    </location>
    <ligand>
        <name>Mg(2+)</name>
        <dbReference type="ChEBI" id="CHEBI:18420"/>
    </ligand>
</feature>
<feature type="binding site" evidence="1">
    <location>
        <position position="539"/>
    </location>
    <ligand>
        <name>Mg(2+)</name>
        <dbReference type="ChEBI" id="CHEBI:18420"/>
    </ligand>
</feature>
<feature type="binding site" evidence="1">
    <location>
        <position position="902"/>
    </location>
    <ligand>
        <name>Zn(2+)</name>
        <dbReference type="ChEBI" id="CHEBI:29105"/>
        <label>2</label>
    </ligand>
</feature>
<feature type="binding site" evidence="1">
    <location>
        <position position="979"/>
    </location>
    <ligand>
        <name>Zn(2+)</name>
        <dbReference type="ChEBI" id="CHEBI:29105"/>
        <label>2</label>
    </ligand>
</feature>
<feature type="binding site" evidence="1">
    <location>
        <position position="986"/>
    </location>
    <ligand>
        <name>Zn(2+)</name>
        <dbReference type="ChEBI" id="CHEBI:29105"/>
        <label>2</label>
    </ligand>
</feature>
<feature type="binding site" evidence="1">
    <location>
        <position position="989"/>
    </location>
    <ligand>
        <name>Zn(2+)</name>
        <dbReference type="ChEBI" id="CHEBI:29105"/>
        <label>2</label>
    </ligand>
</feature>
<proteinExistence type="inferred from homology"/>
<gene>
    <name evidence="1" type="primary">rpoC</name>
    <name type="ordered locus">cauri_0369</name>
</gene>
<sequence length="1331" mass="148011">MFDVNLFDELRIGLATAEDIRRWSKGEVKKPETINYRTLKPEKDGLFCERIFGPTRDWECACGKYKRVRYKGIICERCGVEVTKSKVRRERMGHIELAAPVTHIWYFKGVPSRLGYLLDLAPKDLERIIYFAANIITSVDEEARHNDQSTLEAEMLLEKKDVEDDVEAEIAERAAKLEQDLAELEAAGAKADARRKVQNAADKEMQHIRERGEREVARLDEIWNTFIKLAPKQMIIDETIYEELVDRYEDYFTGGMGAEAIQTLIRNFDLEAEAEELKEIINNGKGQKKMRALKRLKVVAAFLRSGNDPAGMVLDAIPVIPPELRPMVQLDGGRFATSDLNDLYRRVINRNNRLKRMIDLGAPEIIVNNEKRMLQESVDALFDNGRRGRPVTGPGNRPLKSLSDLLKGKQGRFRQNLLGKRVDYSGRSVIIVGPQLKLHECGLPKLMALELFKPFVMKRLVENDYAQNIKSAKRMVERQRPEVWDVLEEAISEHPVMLNRAPTLHRLGIQAFEPKLVEGKAIQLHPLACEAFNADFDGDQMAVHLPLSAEAQAEARVLMLASNNILSPASGKPLAMPRLDMVTGLYYLTMDKGEDEIGGEGRYQPATEDRPEQGVYSSYAEAIMARDRGVLGLQAPIKVRISHLRPPSDIEAEQFPDGWQKGQAWLAETTLGRIMFNDLLPWNYPYLEGVMVRKGGAGNKMLLGDVINDLAAKYPMITVAQVLDKMKDAGFYWATRSGVTITMHDVLVLPNKTEVLESYEKEAERIERKYWEQGALTERERYDRLVELWKDATDTVGNAVEEMYPDDNPIPMIVKSGAAGNMRQIWTLAGMKGMVVNSKGDYITRPIKTSFREGLSVLEYFNNSHGSRKGLADTALRTADSGYLTRRLVDVAQDVIVREEDCGTRQGVRVPLGIEVAPGSYDLHELWETSASGRVVANDVKDENGEVIAEAGTDLTEELSRTIVNAGVLEIKVRSVLTCQTPAGVCAKCYGKSMASGQLVDIGEAVGIVAAQSIGEPGTQLTMRTFHQGGVGGDITGGLPRVQELFEARNPKNRAPIASVDGTVSLSDEGNFWTLTITPDDGSDNVVYEKLSKRQGLAQVRRPMESNPDAMIERSLRDGDHVSTGDRLMRGAPDPHDVLEVLGRRGVEKHLIDEVQAVYRAQGVAIHDKHIEIIIRQMLRRGTVIDAGTTDLLPGNLIDLSEAKQVNAAQVAEGGQPAQLRSEIMGITKASLATESWLSAASFQETTRVLTDAAINKRSDQLIGLKENVIIGKLIPAGTGISRYRNISVKPTEAARNAAYSIPTYGDSIYGDDGFGEFTGASVPLEEDYTF</sequence>
<organism>
    <name type="scientific">Corynebacterium aurimucosum (strain ATCC 700975 / DSM 44827 / CIP 107346 / CN-1)</name>
    <name type="common">Corynebacterium nigricans</name>
    <dbReference type="NCBI Taxonomy" id="548476"/>
    <lineage>
        <taxon>Bacteria</taxon>
        <taxon>Bacillati</taxon>
        <taxon>Actinomycetota</taxon>
        <taxon>Actinomycetes</taxon>
        <taxon>Mycobacteriales</taxon>
        <taxon>Corynebacteriaceae</taxon>
        <taxon>Corynebacterium</taxon>
    </lineage>
</organism>
<keyword id="KW-0240">DNA-directed RNA polymerase</keyword>
<keyword id="KW-0460">Magnesium</keyword>
<keyword id="KW-0479">Metal-binding</keyword>
<keyword id="KW-0548">Nucleotidyltransferase</keyword>
<keyword id="KW-1185">Reference proteome</keyword>
<keyword id="KW-0804">Transcription</keyword>
<keyword id="KW-0808">Transferase</keyword>
<keyword id="KW-0862">Zinc</keyword>
<comment type="function">
    <text evidence="1">DNA-dependent RNA polymerase catalyzes the transcription of DNA into RNA using the four ribonucleoside triphosphates as substrates.</text>
</comment>
<comment type="catalytic activity">
    <reaction evidence="1">
        <text>RNA(n) + a ribonucleoside 5'-triphosphate = RNA(n+1) + diphosphate</text>
        <dbReference type="Rhea" id="RHEA:21248"/>
        <dbReference type="Rhea" id="RHEA-COMP:14527"/>
        <dbReference type="Rhea" id="RHEA-COMP:17342"/>
        <dbReference type="ChEBI" id="CHEBI:33019"/>
        <dbReference type="ChEBI" id="CHEBI:61557"/>
        <dbReference type="ChEBI" id="CHEBI:140395"/>
        <dbReference type="EC" id="2.7.7.6"/>
    </reaction>
</comment>
<comment type="cofactor">
    <cofactor evidence="1">
        <name>Mg(2+)</name>
        <dbReference type="ChEBI" id="CHEBI:18420"/>
    </cofactor>
    <text evidence="1">Binds 1 Mg(2+) ion per subunit.</text>
</comment>
<comment type="cofactor">
    <cofactor evidence="1">
        <name>Zn(2+)</name>
        <dbReference type="ChEBI" id="CHEBI:29105"/>
    </cofactor>
    <text evidence="1">Binds 2 Zn(2+) ions per subunit.</text>
</comment>
<comment type="subunit">
    <text evidence="1">The RNAP catalytic core consists of 2 alpha, 1 beta, 1 beta' and 1 omega subunit. When a sigma factor is associated with the core the holoenzyme is formed, which can initiate transcription.</text>
</comment>
<comment type="similarity">
    <text evidence="1">Belongs to the RNA polymerase beta' chain family.</text>
</comment>
<name>RPOC_CORA7</name>
<reference key="1">
    <citation type="journal article" date="2010" name="BMC Genomics">
        <title>Complete genome sequence and lifestyle of black-pigmented Corynebacterium aurimucosum ATCC 700975 (formerly C. nigricans CN-1) isolated from a vaginal swab of a woman with spontaneous abortion.</title>
        <authorList>
            <person name="Trost E."/>
            <person name="Gotker S."/>
            <person name="Schneider J."/>
            <person name="Schneiker-Bekel S."/>
            <person name="Szczepanowski R."/>
            <person name="Tilker A."/>
            <person name="Viehoever P."/>
            <person name="Arnold W."/>
            <person name="Bekel T."/>
            <person name="Blom J."/>
            <person name="Gartemann K.H."/>
            <person name="Linke B."/>
            <person name="Goesmann A."/>
            <person name="Puhler A."/>
            <person name="Shukla S.K."/>
            <person name="Tauch A."/>
        </authorList>
    </citation>
    <scope>NUCLEOTIDE SEQUENCE [LARGE SCALE GENOMIC DNA]</scope>
    <source>
        <strain>ATCC 700975 / DSM 44827 / CIP 107346 / CN-1</strain>
    </source>
</reference>